<feature type="chain" id="PRO_0000350058" description="Dual-specificity RNA methyltransferase RlmN">
    <location>
        <begin position="1"/>
        <end position="381"/>
    </location>
</feature>
<feature type="domain" description="Radical SAM core" evidence="2">
    <location>
        <begin position="101"/>
        <end position="347"/>
    </location>
</feature>
<feature type="active site" description="Proton acceptor" evidence="1">
    <location>
        <position position="95"/>
    </location>
</feature>
<feature type="active site" description="S-methylcysteine intermediate" evidence="1">
    <location>
        <position position="352"/>
    </location>
</feature>
<feature type="binding site" evidence="1">
    <location>
        <position position="115"/>
    </location>
    <ligand>
        <name>[4Fe-4S] cluster</name>
        <dbReference type="ChEBI" id="CHEBI:49883"/>
        <note>4Fe-4S-S-AdoMet</note>
    </ligand>
</feature>
<feature type="binding site" evidence="1">
    <location>
        <position position="119"/>
    </location>
    <ligand>
        <name>[4Fe-4S] cluster</name>
        <dbReference type="ChEBI" id="CHEBI:49883"/>
        <note>4Fe-4S-S-AdoMet</note>
    </ligand>
</feature>
<feature type="binding site" evidence="1">
    <location>
        <position position="122"/>
    </location>
    <ligand>
        <name>[4Fe-4S] cluster</name>
        <dbReference type="ChEBI" id="CHEBI:49883"/>
        <note>4Fe-4S-S-AdoMet</note>
    </ligand>
</feature>
<feature type="binding site" evidence="1">
    <location>
        <begin position="178"/>
        <end position="179"/>
    </location>
    <ligand>
        <name>S-adenosyl-L-methionine</name>
        <dbReference type="ChEBI" id="CHEBI:59789"/>
    </ligand>
</feature>
<feature type="binding site" evidence="1">
    <location>
        <position position="210"/>
    </location>
    <ligand>
        <name>S-adenosyl-L-methionine</name>
        <dbReference type="ChEBI" id="CHEBI:59789"/>
    </ligand>
</feature>
<feature type="binding site" evidence="1">
    <location>
        <begin position="232"/>
        <end position="234"/>
    </location>
    <ligand>
        <name>S-adenosyl-L-methionine</name>
        <dbReference type="ChEBI" id="CHEBI:59789"/>
    </ligand>
</feature>
<feature type="binding site" evidence="1">
    <location>
        <position position="309"/>
    </location>
    <ligand>
        <name>S-adenosyl-L-methionine</name>
        <dbReference type="ChEBI" id="CHEBI:59789"/>
    </ligand>
</feature>
<feature type="disulfide bond" description="(transient)" evidence="1">
    <location>
        <begin position="108"/>
        <end position="352"/>
    </location>
</feature>
<comment type="function">
    <text evidence="1">Specifically methylates position 2 of adenine 2503 in 23S rRNA and position 2 of adenine 37 in tRNAs. m2A2503 modification seems to play a crucial role in the proofreading step occurring at the peptidyl transferase center and thus would serve to optimize ribosomal fidelity.</text>
</comment>
<comment type="catalytic activity">
    <reaction evidence="1">
        <text>adenosine(2503) in 23S rRNA + 2 reduced [2Fe-2S]-[ferredoxin] + 2 S-adenosyl-L-methionine = 2-methyladenosine(2503) in 23S rRNA + 5'-deoxyadenosine + L-methionine + 2 oxidized [2Fe-2S]-[ferredoxin] + S-adenosyl-L-homocysteine</text>
        <dbReference type="Rhea" id="RHEA:42916"/>
        <dbReference type="Rhea" id="RHEA-COMP:10000"/>
        <dbReference type="Rhea" id="RHEA-COMP:10001"/>
        <dbReference type="Rhea" id="RHEA-COMP:10152"/>
        <dbReference type="Rhea" id="RHEA-COMP:10282"/>
        <dbReference type="ChEBI" id="CHEBI:17319"/>
        <dbReference type="ChEBI" id="CHEBI:33737"/>
        <dbReference type="ChEBI" id="CHEBI:33738"/>
        <dbReference type="ChEBI" id="CHEBI:57844"/>
        <dbReference type="ChEBI" id="CHEBI:57856"/>
        <dbReference type="ChEBI" id="CHEBI:59789"/>
        <dbReference type="ChEBI" id="CHEBI:74411"/>
        <dbReference type="ChEBI" id="CHEBI:74497"/>
        <dbReference type="EC" id="2.1.1.192"/>
    </reaction>
</comment>
<comment type="catalytic activity">
    <reaction evidence="1">
        <text>adenosine(37) in tRNA + 2 reduced [2Fe-2S]-[ferredoxin] + 2 S-adenosyl-L-methionine = 2-methyladenosine(37) in tRNA + 5'-deoxyadenosine + L-methionine + 2 oxidized [2Fe-2S]-[ferredoxin] + S-adenosyl-L-homocysteine</text>
        <dbReference type="Rhea" id="RHEA:43332"/>
        <dbReference type="Rhea" id="RHEA-COMP:10000"/>
        <dbReference type="Rhea" id="RHEA-COMP:10001"/>
        <dbReference type="Rhea" id="RHEA-COMP:10162"/>
        <dbReference type="Rhea" id="RHEA-COMP:10485"/>
        <dbReference type="ChEBI" id="CHEBI:17319"/>
        <dbReference type="ChEBI" id="CHEBI:33737"/>
        <dbReference type="ChEBI" id="CHEBI:33738"/>
        <dbReference type="ChEBI" id="CHEBI:57844"/>
        <dbReference type="ChEBI" id="CHEBI:57856"/>
        <dbReference type="ChEBI" id="CHEBI:59789"/>
        <dbReference type="ChEBI" id="CHEBI:74411"/>
        <dbReference type="ChEBI" id="CHEBI:74497"/>
        <dbReference type="EC" id="2.1.1.192"/>
    </reaction>
</comment>
<comment type="cofactor">
    <cofactor evidence="1">
        <name>[4Fe-4S] cluster</name>
        <dbReference type="ChEBI" id="CHEBI:49883"/>
    </cofactor>
    <text evidence="1">Binds 1 [4Fe-4S] cluster. The cluster is coordinated with 3 cysteines and an exchangeable S-adenosyl-L-methionine.</text>
</comment>
<comment type="subcellular location">
    <subcellularLocation>
        <location evidence="1">Cytoplasm</location>
    </subcellularLocation>
</comment>
<comment type="miscellaneous">
    <text evidence="1">Reaction proceeds by a ping-pong mechanism involving intermediate methylation of a conserved cysteine residue.</text>
</comment>
<comment type="similarity">
    <text evidence="1">Belongs to the radical SAM superfamily. RlmN family.</text>
</comment>
<proteinExistence type="inferred from homology"/>
<name>RLMN_BORPD</name>
<organism>
    <name type="scientific">Bordetella petrii (strain ATCC BAA-461 / DSM 12804 / CCUG 43448)</name>
    <dbReference type="NCBI Taxonomy" id="340100"/>
    <lineage>
        <taxon>Bacteria</taxon>
        <taxon>Pseudomonadati</taxon>
        <taxon>Pseudomonadota</taxon>
        <taxon>Betaproteobacteria</taxon>
        <taxon>Burkholderiales</taxon>
        <taxon>Alcaligenaceae</taxon>
        <taxon>Bordetella</taxon>
    </lineage>
</organism>
<accession>A9IK57</accession>
<gene>
    <name evidence="1" type="primary">rlmN</name>
    <name type="ordered locus">Bpet2017</name>
</gene>
<evidence type="ECO:0000255" key="1">
    <source>
        <dbReference type="HAMAP-Rule" id="MF_01849"/>
    </source>
</evidence>
<evidence type="ECO:0000255" key="2">
    <source>
        <dbReference type="PROSITE-ProRule" id="PRU01266"/>
    </source>
</evidence>
<protein>
    <recommendedName>
        <fullName evidence="1">Dual-specificity RNA methyltransferase RlmN</fullName>
        <ecNumber evidence="1">2.1.1.192</ecNumber>
    </recommendedName>
    <alternativeName>
        <fullName evidence="1">23S rRNA (adenine(2503)-C(2))-methyltransferase</fullName>
    </alternativeName>
    <alternativeName>
        <fullName evidence="1">23S rRNA m2A2503 methyltransferase</fullName>
    </alternativeName>
    <alternativeName>
        <fullName evidence="1">Ribosomal RNA large subunit methyltransferase N</fullName>
    </alternativeName>
    <alternativeName>
        <fullName evidence="1">tRNA (adenine(37)-C(2))-methyltransferase</fullName>
    </alternativeName>
    <alternativeName>
        <fullName evidence="1">tRNA m2A37 methyltransferase</fullName>
    </alternativeName>
</protein>
<reference key="1">
    <citation type="journal article" date="2008" name="BMC Genomics">
        <title>The missing link: Bordetella petrii is endowed with both the metabolic versatility of environmental bacteria and virulence traits of pathogenic Bordetellae.</title>
        <authorList>
            <person name="Gross R."/>
            <person name="Guzman C.A."/>
            <person name="Sebaihia M."/>
            <person name="Martin dos Santos V.A.P."/>
            <person name="Pieper D.H."/>
            <person name="Koebnik R."/>
            <person name="Lechner M."/>
            <person name="Bartels D."/>
            <person name="Buhrmester J."/>
            <person name="Choudhuri J.V."/>
            <person name="Ebensen T."/>
            <person name="Gaigalat L."/>
            <person name="Herrmann S."/>
            <person name="Khachane A.N."/>
            <person name="Larisch C."/>
            <person name="Link S."/>
            <person name="Linke B."/>
            <person name="Meyer F."/>
            <person name="Mormann S."/>
            <person name="Nakunst D."/>
            <person name="Rueckert C."/>
            <person name="Schneiker-Bekel S."/>
            <person name="Schulze K."/>
            <person name="Voerholter F.-J."/>
            <person name="Yevsa T."/>
            <person name="Engle J.T."/>
            <person name="Goldman W.E."/>
            <person name="Puehler A."/>
            <person name="Goebel U.B."/>
            <person name="Goesmann A."/>
            <person name="Bloecker H."/>
            <person name="Kaiser O."/>
            <person name="Martinez-Arias R."/>
        </authorList>
    </citation>
    <scope>NUCLEOTIDE SEQUENCE [LARGE SCALE GENOMIC DNA]</scope>
    <source>
        <strain>ATCC BAA-461 / DSM 12804 / CCUG 43448</strain>
    </source>
</reference>
<sequence length="381" mass="41872">METAERVNLLGLDGAALSDLVGQWGGKPFRARQLQRWIHQRGADSFDAMTDLARDFRGQLAQQCRIQALPVNTEQRSSDGTRKWLFDVGQGNAIETVFIPEDDRGTLCVSSQAGCAVNCRFCSTGHQGFNRNLTSSEIIGQLWWAKRVLEADAGTARLGGAGNDDTRVVSNVVMMGMGEPLLNYDQLLPALRLMLDDNAYGLSRRRVTVSTSGVVPMMDRLSRDCPVALAVSLHAPTDALRDELVPLNKKYPLAELLAACERYLASAPRDFITFEYCMLDGINDTDQHARALIQVARQVRCKLNLIPFNPFPASGLKRSPSARVKVFAQRLMDAGIVTTVRKTRGDDIDAACGQLAGEVRDRTRVAQRNAGRTIPIAQVQA</sequence>
<keyword id="KW-0004">4Fe-4S</keyword>
<keyword id="KW-0963">Cytoplasm</keyword>
<keyword id="KW-1015">Disulfide bond</keyword>
<keyword id="KW-0408">Iron</keyword>
<keyword id="KW-0411">Iron-sulfur</keyword>
<keyword id="KW-0479">Metal-binding</keyword>
<keyword id="KW-0489">Methyltransferase</keyword>
<keyword id="KW-0698">rRNA processing</keyword>
<keyword id="KW-0949">S-adenosyl-L-methionine</keyword>
<keyword id="KW-0808">Transferase</keyword>
<keyword id="KW-0819">tRNA processing</keyword>
<dbReference type="EC" id="2.1.1.192" evidence="1"/>
<dbReference type="EMBL" id="AM902716">
    <property type="protein sequence ID" value="CAP42357.1"/>
    <property type="molecule type" value="Genomic_DNA"/>
</dbReference>
<dbReference type="SMR" id="A9IK57"/>
<dbReference type="STRING" id="94624.Bpet2017"/>
<dbReference type="KEGG" id="bpt:Bpet2017"/>
<dbReference type="eggNOG" id="COG0820">
    <property type="taxonomic scope" value="Bacteria"/>
</dbReference>
<dbReference type="Proteomes" id="UP000001225">
    <property type="component" value="Chromosome"/>
</dbReference>
<dbReference type="GO" id="GO:0005737">
    <property type="term" value="C:cytoplasm"/>
    <property type="evidence" value="ECO:0007669"/>
    <property type="project" value="UniProtKB-SubCell"/>
</dbReference>
<dbReference type="GO" id="GO:0051539">
    <property type="term" value="F:4 iron, 4 sulfur cluster binding"/>
    <property type="evidence" value="ECO:0007669"/>
    <property type="project" value="UniProtKB-UniRule"/>
</dbReference>
<dbReference type="GO" id="GO:0046872">
    <property type="term" value="F:metal ion binding"/>
    <property type="evidence" value="ECO:0007669"/>
    <property type="project" value="UniProtKB-KW"/>
</dbReference>
<dbReference type="GO" id="GO:0070040">
    <property type="term" value="F:rRNA (adenine(2503)-C2-)-methyltransferase activity"/>
    <property type="evidence" value="ECO:0007669"/>
    <property type="project" value="UniProtKB-UniRule"/>
</dbReference>
<dbReference type="GO" id="GO:0019843">
    <property type="term" value="F:rRNA binding"/>
    <property type="evidence" value="ECO:0007669"/>
    <property type="project" value="UniProtKB-UniRule"/>
</dbReference>
<dbReference type="GO" id="GO:0002935">
    <property type="term" value="F:tRNA (adenine(37)-C2)-methyltransferase activity"/>
    <property type="evidence" value="ECO:0007669"/>
    <property type="project" value="UniProtKB-UniRule"/>
</dbReference>
<dbReference type="GO" id="GO:0000049">
    <property type="term" value="F:tRNA binding"/>
    <property type="evidence" value="ECO:0007669"/>
    <property type="project" value="UniProtKB-UniRule"/>
</dbReference>
<dbReference type="GO" id="GO:0070475">
    <property type="term" value="P:rRNA base methylation"/>
    <property type="evidence" value="ECO:0007669"/>
    <property type="project" value="UniProtKB-UniRule"/>
</dbReference>
<dbReference type="GO" id="GO:0030488">
    <property type="term" value="P:tRNA methylation"/>
    <property type="evidence" value="ECO:0007669"/>
    <property type="project" value="UniProtKB-UniRule"/>
</dbReference>
<dbReference type="CDD" id="cd01335">
    <property type="entry name" value="Radical_SAM"/>
    <property type="match status" value="1"/>
</dbReference>
<dbReference type="FunFam" id="3.20.20.70:FF:000008">
    <property type="entry name" value="Dual-specificity RNA methyltransferase RlmN"/>
    <property type="match status" value="1"/>
</dbReference>
<dbReference type="Gene3D" id="1.10.150.530">
    <property type="match status" value="1"/>
</dbReference>
<dbReference type="Gene3D" id="3.20.20.70">
    <property type="entry name" value="Aldolase class I"/>
    <property type="match status" value="1"/>
</dbReference>
<dbReference type="HAMAP" id="MF_01849">
    <property type="entry name" value="RNA_methyltr_RlmN"/>
    <property type="match status" value="1"/>
</dbReference>
<dbReference type="InterPro" id="IPR013785">
    <property type="entry name" value="Aldolase_TIM"/>
</dbReference>
<dbReference type="InterPro" id="IPR040072">
    <property type="entry name" value="Methyltransferase_A"/>
</dbReference>
<dbReference type="InterPro" id="IPR048641">
    <property type="entry name" value="RlmN_N"/>
</dbReference>
<dbReference type="InterPro" id="IPR027492">
    <property type="entry name" value="RNA_MTrfase_RlmN"/>
</dbReference>
<dbReference type="InterPro" id="IPR004383">
    <property type="entry name" value="rRNA_lsu_MTrfase_RlmN/Cfr"/>
</dbReference>
<dbReference type="InterPro" id="IPR007197">
    <property type="entry name" value="rSAM"/>
</dbReference>
<dbReference type="NCBIfam" id="TIGR00048">
    <property type="entry name" value="rRNA_mod_RlmN"/>
    <property type="match status" value="1"/>
</dbReference>
<dbReference type="PANTHER" id="PTHR30544">
    <property type="entry name" value="23S RRNA METHYLTRANSFERASE"/>
    <property type="match status" value="1"/>
</dbReference>
<dbReference type="PANTHER" id="PTHR30544:SF5">
    <property type="entry name" value="RADICAL SAM CORE DOMAIN-CONTAINING PROTEIN"/>
    <property type="match status" value="1"/>
</dbReference>
<dbReference type="Pfam" id="PF04055">
    <property type="entry name" value="Radical_SAM"/>
    <property type="match status" value="1"/>
</dbReference>
<dbReference type="Pfam" id="PF21016">
    <property type="entry name" value="RlmN_N"/>
    <property type="match status" value="1"/>
</dbReference>
<dbReference type="PIRSF" id="PIRSF006004">
    <property type="entry name" value="CHP00048"/>
    <property type="match status" value="1"/>
</dbReference>
<dbReference type="SFLD" id="SFLDF00275">
    <property type="entry name" value="adenosine_C2_methyltransferase"/>
    <property type="match status" value="1"/>
</dbReference>
<dbReference type="SFLD" id="SFLDG01062">
    <property type="entry name" value="methyltransferase_(Class_A)"/>
    <property type="match status" value="1"/>
</dbReference>
<dbReference type="SUPFAM" id="SSF102114">
    <property type="entry name" value="Radical SAM enzymes"/>
    <property type="match status" value="1"/>
</dbReference>
<dbReference type="PROSITE" id="PS51918">
    <property type="entry name" value="RADICAL_SAM"/>
    <property type="match status" value="1"/>
</dbReference>